<feature type="chain" id="PRO_0000180376" description="Ribonuclease 3">
    <location>
        <begin position="1"/>
        <end position="245"/>
    </location>
</feature>
<feature type="domain" description="RNase III" evidence="1">
    <location>
        <begin position="18"/>
        <end position="146"/>
    </location>
</feature>
<feature type="domain" description="DRBM" evidence="1">
    <location>
        <begin position="173"/>
        <end position="242"/>
    </location>
</feature>
<feature type="active site" evidence="1">
    <location>
        <position position="63"/>
    </location>
</feature>
<feature type="active site" evidence="1">
    <location>
        <position position="135"/>
    </location>
</feature>
<feature type="binding site" evidence="1">
    <location>
        <position position="59"/>
    </location>
    <ligand>
        <name>Mg(2+)</name>
        <dbReference type="ChEBI" id="CHEBI:18420"/>
    </ligand>
</feature>
<feature type="binding site" evidence="1">
    <location>
        <position position="132"/>
    </location>
    <ligand>
        <name>Mg(2+)</name>
        <dbReference type="ChEBI" id="CHEBI:18420"/>
    </ligand>
</feature>
<feature type="binding site" evidence="1">
    <location>
        <position position="135"/>
    </location>
    <ligand>
        <name>Mg(2+)</name>
        <dbReference type="ChEBI" id="CHEBI:18420"/>
    </ligand>
</feature>
<proteinExistence type="inferred from homology"/>
<name>RNC_BORBU</name>
<gene>
    <name evidence="1" type="primary">rnc</name>
    <name type="ordered locus">BB_0705</name>
</gene>
<sequence>MKKKSSDFCLCNERKSQLSKFLENLSIDFSNFDLLNTALCHSSYSNELDQKSSNNERLEFLGDSVLNLIITDHLYKTYPNKSEGELSKARSYIVSEDSLSNIAREINLGSYILLGRGEESNDGRNKKGILADAIEAFVGAIYLDSGFSRATEFVVGLFDMYIRLMFNRGDFKDYKSLLQEYVQKKYKISPSYKLDKEIGPDHDKVFCVELYVGENFISNGKGKSKKEAEMRAAEVALKAMENINL</sequence>
<reference key="1">
    <citation type="journal article" date="1997" name="Nature">
        <title>Genomic sequence of a Lyme disease spirochaete, Borrelia burgdorferi.</title>
        <authorList>
            <person name="Fraser C.M."/>
            <person name="Casjens S."/>
            <person name="Huang W.M."/>
            <person name="Sutton G.G."/>
            <person name="Clayton R.A."/>
            <person name="Lathigra R."/>
            <person name="White O."/>
            <person name="Ketchum K.A."/>
            <person name="Dodson R.J."/>
            <person name="Hickey E.K."/>
            <person name="Gwinn M.L."/>
            <person name="Dougherty B.A."/>
            <person name="Tomb J.-F."/>
            <person name="Fleischmann R.D."/>
            <person name="Richardson D.L."/>
            <person name="Peterson J.D."/>
            <person name="Kerlavage A.R."/>
            <person name="Quackenbush J."/>
            <person name="Salzberg S.L."/>
            <person name="Hanson M."/>
            <person name="van Vugt R."/>
            <person name="Palmer N."/>
            <person name="Adams M.D."/>
            <person name="Gocayne J.D."/>
            <person name="Weidman J.F."/>
            <person name="Utterback T.R."/>
            <person name="Watthey L."/>
            <person name="McDonald L.A."/>
            <person name="Artiach P."/>
            <person name="Bowman C."/>
            <person name="Garland S.A."/>
            <person name="Fujii C."/>
            <person name="Cotton M.D."/>
            <person name="Horst K."/>
            <person name="Roberts K.M."/>
            <person name="Hatch B."/>
            <person name="Smith H.O."/>
            <person name="Venter J.C."/>
        </authorList>
    </citation>
    <scope>NUCLEOTIDE SEQUENCE [LARGE SCALE GENOMIC DNA]</scope>
    <source>
        <strain>ATCC 35210 / DSM 4680 / CIP 102532 / B31</strain>
    </source>
</reference>
<dbReference type="EC" id="3.1.26.3" evidence="1"/>
<dbReference type="EMBL" id="AE000783">
    <property type="protein sequence ID" value="AAC67040.2"/>
    <property type="molecule type" value="Genomic_DNA"/>
</dbReference>
<dbReference type="PIR" id="H70187">
    <property type="entry name" value="H70187"/>
</dbReference>
<dbReference type="RefSeq" id="NP_212839.2">
    <property type="nucleotide sequence ID" value="NC_001318.1"/>
</dbReference>
<dbReference type="RefSeq" id="WP_002557292.1">
    <property type="nucleotide sequence ID" value="NC_001318.1"/>
</dbReference>
<dbReference type="SMR" id="O51648"/>
<dbReference type="STRING" id="224326.BB_0705"/>
<dbReference type="PaxDb" id="224326-BB_0705"/>
<dbReference type="EnsemblBacteria" id="AAC67040">
    <property type="protein sequence ID" value="AAC67040"/>
    <property type="gene ID" value="BB_0705"/>
</dbReference>
<dbReference type="GeneID" id="56567514"/>
<dbReference type="KEGG" id="bbu:BB_0705"/>
<dbReference type="PATRIC" id="fig|224326.49.peg.1096"/>
<dbReference type="HOGENOM" id="CLU_000907_1_3_12"/>
<dbReference type="OrthoDB" id="9805026at2"/>
<dbReference type="BRENDA" id="3.1.26.3">
    <property type="organism ID" value="902"/>
</dbReference>
<dbReference type="Proteomes" id="UP000001807">
    <property type="component" value="Chromosome"/>
</dbReference>
<dbReference type="GO" id="GO:0005737">
    <property type="term" value="C:cytoplasm"/>
    <property type="evidence" value="ECO:0007669"/>
    <property type="project" value="UniProtKB-SubCell"/>
</dbReference>
<dbReference type="GO" id="GO:0003725">
    <property type="term" value="F:double-stranded RNA binding"/>
    <property type="evidence" value="ECO:0007669"/>
    <property type="project" value="TreeGrafter"/>
</dbReference>
<dbReference type="GO" id="GO:0046872">
    <property type="term" value="F:metal ion binding"/>
    <property type="evidence" value="ECO:0007669"/>
    <property type="project" value="UniProtKB-KW"/>
</dbReference>
<dbReference type="GO" id="GO:0004525">
    <property type="term" value="F:ribonuclease III activity"/>
    <property type="evidence" value="ECO:0007669"/>
    <property type="project" value="UniProtKB-UniRule"/>
</dbReference>
<dbReference type="GO" id="GO:0019843">
    <property type="term" value="F:rRNA binding"/>
    <property type="evidence" value="ECO:0007669"/>
    <property type="project" value="UniProtKB-KW"/>
</dbReference>
<dbReference type="GO" id="GO:0006397">
    <property type="term" value="P:mRNA processing"/>
    <property type="evidence" value="ECO:0007669"/>
    <property type="project" value="UniProtKB-UniRule"/>
</dbReference>
<dbReference type="GO" id="GO:0010468">
    <property type="term" value="P:regulation of gene expression"/>
    <property type="evidence" value="ECO:0007669"/>
    <property type="project" value="TreeGrafter"/>
</dbReference>
<dbReference type="GO" id="GO:0006364">
    <property type="term" value="P:rRNA processing"/>
    <property type="evidence" value="ECO:0007669"/>
    <property type="project" value="UniProtKB-UniRule"/>
</dbReference>
<dbReference type="GO" id="GO:0008033">
    <property type="term" value="P:tRNA processing"/>
    <property type="evidence" value="ECO:0007669"/>
    <property type="project" value="UniProtKB-KW"/>
</dbReference>
<dbReference type="CDD" id="cd10845">
    <property type="entry name" value="DSRM_RNAse_III_family"/>
    <property type="match status" value="1"/>
</dbReference>
<dbReference type="CDD" id="cd00593">
    <property type="entry name" value="RIBOc"/>
    <property type="match status" value="1"/>
</dbReference>
<dbReference type="FunFam" id="1.10.1520.10:FF:000001">
    <property type="entry name" value="Ribonuclease 3"/>
    <property type="match status" value="1"/>
</dbReference>
<dbReference type="FunFam" id="3.30.160.20:FF:000003">
    <property type="entry name" value="Ribonuclease 3"/>
    <property type="match status" value="1"/>
</dbReference>
<dbReference type="Gene3D" id="3.30.160.20">
    <property type="match status" value="1"/>
</dbReference>
<dbReference type="Gene3D" id="1.10.1520.10">
    <property type="entry name" value="Ribonuclease III domain"/>
    <property type="match status" value="1"/>
</dbReference>
<dbReference type="HAMAP" id="MF_00104">
    <property type="entry name" value="RNase_III"/>
    <property type="match status" value="1"/>
</dbReference>
<dbReference type="InterPro" id="IPR014720">
    <property type="entry name" value="dsRBD_dom"/>
</dbReference>
<dbReference type="InterPro" id="IPR011907">
    <property type="entry name" value="RNase_III"/>
</dbReference>
<dbReference type="InterPro" id="IPR000999">
    <property type="entry name" value="RNase_III_dom"/>
</dbReference>
<dbReference type="InterPro" id="IPR036389">
    <property type="entry name" value="RNase_III_sf"/>
</dbReference>
<dbReference type="NCBIfam" id="TIGR02191">
    <property type="entry name" value="RNaseIII"/>
    <property type="match status" value="1"/>
</dbReference>
<dbReference type="PANTHER" id="PTHR11207:SF0">
    <property type="entry name" value="RIBONUCLEASE 3"/>
    <property type="match status" value="1"/>
</dbReference>
<dbReference type="PANTHER" id="PTHR11207">
    <property type="entry name" value="RIBONUCLEASE III"/>
    <property type="match status" value="1"/>
</dbReference>
<dbReference type="Pfam" id="PF00035">
    <property type="entry name" value="dsrm"/>
    <property type="match status" value="1"/>
</dbReference>
<dbReference type="Pfam" id="PF14622">
    <property type="entry name" value="Ribonucleas_3_3"/>
    <property type="match status" value="1"/>
</dbReference>
<dbReference type="SMART" id="SM00358">
    <property type="entry name" value="DSRM"/>
    <property type="match status" value="1"/>
</dbReference>
<dbReference type="SMART" id="SM00535">
    <property type="entry name" value="RIBOc"/>
    <property type="match status" value="1"/>
</dbReference>
<dbReference type="SUPFAM" id="SSF54768">
    <property type="entry name" value="dsRNA-binding domain-like"/>
    <property type="match status" value="1"/>
</dbReference>
<dbReference type="SUPFAM" id="SSF69065">
    <property type="entry name" value="RNase III domain-like"/>
    <property type="match status" value="1"/>
</dbReference>
<dbReference type="PROSITE" id="PS50137">
    <property type="entry name" value="DS_RBD"/>
    <property type="match status" value="1"/>
</dbReference>
<dbReference type="PROSITE" id="PS00517">
    <property type="entry name" value="RNASE_3_1"/>
    <property type="match status" value="1"/>
</dbReference>
<dbReference type="PROSITE" id="PS50142">
    <property type="entry name" value="RNASE_3_2"/>
    <property type="match status" value="1"/>
</dbReference>
<comment type="function">
    <text evidence="1">Digests double-stranded RNA. Involved in the processing of primary rRNA transcript to yield the immediate precursors to the large and small rRNAs (23S and 16S). Processes some mRNAs, and tRNAs when they are encoded in the rRNA operon. Processes pre-crRNA and tracrRNA of type II CRISPR loci if present in the organism.</text>
</comment>
<comment type="catalytic activity">
    <reaction evidence="1">
        <text>Endonucleolytic cleavage to 5'-phosphomonoester.</text>
        <dbReference type="EC" id="3.1.26.3"/>
    </reaction>
</comment>
<comment type="cofactor">
    <cofactor evidence="1">
        <name>Mg(2+)</name>
        <dbReference type="ChEBI" id="CHEBI:18420"/>
    </cofactor>
</comment>
<comment type="subunit">
    <text evidence="1">Homodimer.</text>
</comment>
<comment type="subcellular location">
    <subcellularLocation>
        <location evidence="1">Cytoplasm</location>
    </subcellularLocation>
</comment>
<comment type="similarity">
    <text evidence="1">Belongs to the ribonuclease III family.</text>
</comment>
<protein>
    <recommendedName>
        <fullName evidence="1">Ribonuclease 3</fullName>
        <ecNumber evidence="1">3.1.26.3</ecNumber>
    </recommendedName>
    <alternativeName>
        <fullName evidence="1">Ribonuclease III</fullName>
        <shortName evidence="1">RNase III</shortName>
    </alternativeName>
</protein>
<evidence type="ECO:0000255" key="1">
    <source>
        <dbReference type="HAMAP-Rule" id="MF_00104"/>
    </source>
</evidence>
<organism>
    <name type="scientific">Borreliella burgdorferi (strain ATCC 35210 / DSM 4680 / CIP 102532 / B31)</name>
    <name type="common">Borrelia burgdorferi</name>
    <dbReference type="NCBI Taxonomy" id="224326"/>
    <lineage>
        <taxon>Bacteria</taxon>
        <taxon>Pseudomonadati</taxon>
        <taxon>Spirochaetota</taxon>
        <taxon>Spirochaetia</taxon>
        <taxon>Spirochaetales</taxon>
        <taxon>Borreliaceae</taxon>
        <taxon>Borreliella</taxon>
    </lineage>
</organism>
<accession>O51648</accession>
<keyword id="KW-0963">Cytoplasm</keyword>
<keyword id="KW-0255">Endonuclease</keyword>
<keyword id="KW-0378">Hydrolase</keyword>
<keyword id="KW-0460">Magnesium</keyword>
<keyword id="KW-0479">Metal-binding</keyword>
<keyword id="KW-0507">mRNA processing</keyword>
<keyword id="KW-0540">Nuclease</keyword>
<keyword id="KW-1185">Reference proteome</keyword>
<keyword id="KW-0694">RNA-binding</keyword>
<keyword id="KW-0698">rRNA processing</keyword>
<keyword id="KW-0699">rRNA-binding</keyword>
<keyword id="KW-0819">tRNA processing</keyword>